<reference key="1">
    <citation type="journal article" date="1999" name="Nature">
        <title>Evidence for lateral gene transfer between Archaea and Bacteria from genome sequence of Thermotoga maritima.</title>
        <authorList>
            <person name="Nelson K.E."/>
            <person name="Clayton R.A."/>
            <person name="Gill S.R."/>
            <person name="Gwinn M.L."/>
            <person name="Dodson R.J."/>
            <person name="Haft D.H."/>
            <person name="Hickey E.K."/>
            <person name="Peterson J.D."/>
            <person name="Nelson W.C."/>
            <person name="Ketchum K.A."/>
            <person name="McDonald L.A."/>
            <person name="Utterback T.R."/>
            <person name="Malek J.A."/>
            <person name="Linher K.D."/>
            <person name="Garrett M.M."/>
            <person name="Stewart A.M."/>
            <person name="Cotton M.D."/>
            <person name="Pratt M.S."/>
            <person name="Phillips C.A."/>
            <person name="Richardson D.L."/>
            <person name="Heidelberg J.F."/>
            <person name="Sutton G.G."/>
            <person name="Fleischmann R.D."/>
            <person name="Eisen J.A."/>
            <person name="White O."/>
            <person name="Salzberg S.L."/>
            <person name="Smith H.O."/>
            <person name="Venter J.C."/>
            <person name="Fraser C.M."/>
        </authorList>
    </citation>
    <scope>NUCLEOTIDE SEQUENCE [LARGE SCALE GENOMIC DNA]</scope>
    <source>
        <strain>ATCC 43589 / DSM 3109 / JCM 10099 / NBRC 100826 / MSB8</strain>
    </source>
</reference>
<name>NTPTH_THEMA</name>
<dbReference type="EC" id="3.6.1.15" evidence="1"/>
<dbReference type="EMBL" id="AE000512">
    <property type="protein sequence ID" value="AAD35130.1"/>
    <property type="molecule type" value="Genomic_DNA"/>
</dbReference>
<dbReference type="PIR" id="A72425">
    <property type="entry name" value="A72425"/>
</dbReference>
<dbReference type="RefSeq" id="NP_227852.1">
    <property type="nucleotide sequence ID" value="NC_000853.1"/>
</dbReference>
<dbReference type="RefSeq" id="WP_004082498.1">
    <property type="nucleotide sequence ID" value="NZ_CP011107.1"/>
</dbReference>
<dbReference type="SMR" id="Q9WXP3"/>
<dbReference type="STRING" id="243274.TM_0036"/>
<dbReference type="PaxDb" id="243274-THEMA_04620"/>
<dbReference type="EnsemblBacteria" id="AAD35130">
    <property type="protein sequence ID" value="AAD35130"/>
    <property type="gene ID" value="TM_0036"/>
</dbReference>
<dbReference type="KEGG" id="tma:TM0036"/>
<dbReference type="KEGG" id="tmi:THEMA_04620"/>
<dbReference type="KEGG" id="tmm:Tmari_0033"/>
<dbReference type="KEGG" id="tmw:THMA_0032"/>
<dbReference type="eggNOG" id="COG1618">
    <property type="taxonomic scope" value="Bacteria"/>
</dbReference>
<dbReference type="InParanoid" id="Q9WXP3"/>
<dbReference type="OrthoDB" id="9786803at2"/>
<dbReference type="Proteomes" id="UP000008183">
    <property type="component" value="Chromosome"/>
</dbReference>
<dbReference type="GO" id="GO:0005524">
    <property type="term" value="F:ATP binding"/>
    <property type="evidence" value="ECO:0007669"/>
    <property type="project" value="UniProtKB-UniRule"/>
</dbReference>
<dbReference type="GO" id="GO:0016887">
    <property type="term" value="F:ATP hydrolysis activity"/>
    <property type="evidence" value="ECO:0007669"/>
    <property type="project" value="InterPro"/>
</dbReference>
<dbReference type="CDD" id="cd19482">
    <property type="entry name" value="RecA-like_Thep1"/>
    <property type="match status" value="1"/>
</dbReference>
<dbReference type="Gene3D" id="3.40.50.300">
    <property type="entry name" value="P-loop containing nucleotide triphosphate hydrolases"/>
    <property type="match status" value="1"/>
</dbReference>
<dbReference type="HAMAP" id="MF_00796">
    <property type="entry name" value="NTPase_1"/>
    <property type="match status" value="1"/>
</dbReference>
<dbReference type="InterPro" id="IPR003593">
    <property type="entry name" value="AAA+_ATPase"/>
</dbReference>
<dbReference type="InterPro" id="IPR004948">
    <property type="entry name" value="Nuc-triphosphatase_THEP1"/>
</dbReference>
<dbReference type="InterPro" id="IPR027417">
    <property type="entry name" value="P-loop_NTPase"/>
</dbReference>
<dbReference type="NCBIfam" id="NF010248">
    <property type="entry name" value="PRK13695.1"/>
    <property type="match status" value="1"/>
</dbReference>
<dbReference type="PANTHER" id="PTHR43146">
    <property type="entry name" value="CANCER-RELATED NUCLEOSIDE-TRIPHOSPHATASE"/>
    <property type="match status" value="1"/>
</dbReference>
<dbReference type="PANTHER" id="PTHR43146:SF1">
    <property type="entry name" value="CANCER-RELATED NUCLEOSIDE-TRIPHOSPHATASE"/>
    <property type="match status" value="1"/>
</dbReference>
<dbReference type="Pfam" id="PF03266">
    <property type="entry name" value="NTPase_1"/>
    <property type="match status" value="1"/>
</dbReference>
<dbReference type="SMART" id="SM00382">
    <property type="entry name" value="AAA"/>
    <property type="match status" value="1"/>
</dbReference>
<dbReference type="SUPFAM" id="SSF52540">
    <property type="entry name" value="P-loop containing nucleoside triphosphate hydrolases"/>
    <property type="match status" value="1"/>
</dbReference>
<gene>
    <name type="ordered locus">TM_0036</name>
</gene>
<sequence>MKILITGRPGVGKTTLIKKLSRLLQNAGGFYTEEMREGEKRIGFKIITLDGEEGILARTDLPSPYRVGKYYVNLKDLEEIGVRSLERAFQEKDLIIVDEIGKMELLSRKFREVVEKIFDSEKDVIATIKKSSDPFVEKIKNRNDVVIFELNEKNRNSLLNEILSVLKFNRGEKQ</sequence>
<protein>
    <recommendedName>
        <fullName evidence="1">Nucleoside-triphosphatase THEP1</fullName>
        <shortName evidence="1">NTPase THEP1</shortName>
        <ecNumber evidence="1">3.6.1.15</ecNumber>
    </recommendedName>
    <alternativeName>
        <fullName evidence="1">Nucleoside triphosphate phosphohydrolase</fullName>
    </alternativeName>
</protein>
<organism>
    <name type="scientific">Thermotoga maritima (strain ATCC 43589 / DSM 3109 / JCM 10099 / NBRC 100826 / MSB8)</name>
    <dbReference type="NCBI Taxonomy" id="243274"/>
    <lineage>
        <taxon>Bacteria</taxon>
        <taxon>Thermotogati</taxon>
        <taxon>Thermotogota</taxon>
        <taxon>Thermotogae</taxon>
        <taxon>Thermotogales</taxon>
        <taxon>Thermotogaceae</taxon>
        <taxon>Thermotoga</taxon>
    </lineage>
</organism>
<accession>Q9WXP3</accession>
<feature type="chain" id="PRO_0000146710" description="Nucleoside-triphosphatase THEP1">
    <location>
        <begin position="1"/>
        <end position="174"/>
    </location>
</feature>
<feature type="binding site" evidence="1">
    <location>
        <begin position="7"/>
        <end position="14"/>
    </location>
    <ligand>
        <name>ATP</name>
        <dbReference type="ChEBI" id="CHEBI:30616"/>
    </ligand>
</feature>
<feature type="binding site" evidence="1">
    <location>
        <begin position="94"/>
        <end position="101"/>
    </location>
    <ligand>
        <name>ATP</name>
        <dbReference type="ChEBI" id="CHEBI:30616"/>
    </ligand>
</feature>
<evidence type="ECO:0000255" key="1">
    <source>
        <dbReference type="HAMAP-Rule" id="MF_00796"/>
    </source>
</evidence>
<proteinExistence type="inferred from homology"/>
<comment type="function">
    <text evidence="1">Has nucleotide phosphatase activity towards ATP, GTP, CTP, TTP and UTP. May hydrolyze nucleoside diphosphates with lower efficiency.</text>
</comment>
<comment type="catalytic activity">
    <reaction evidence="1">
        <text>a ribonucleoside 5'-triphosphate + H2O = a ribonucleoside 5'-diphosphate + phosphate + H(+)</text>
        <dbReference type="Rhea" id="RHEA:23680"/>
        <dbReference type="ChEBI" id="CHEBI:15377"/>
        <dbReference type="ChEBI" id="CHEBI:15378"/>
        <dbReference type="ChEBI" id="CHEBI:43474"/>
        <dbReference type="ChEBI" id="CHEBI:57930"/>
        <dbReference type="ChEBI" id="CHEBI:61557"/>
        <dbReference type="EC" id="3.6.1.15"/>
    </reaction>
</comment>
<comment type="similarity">
    <text evidence="1">Belongs to the THEP1 NTPase family.</text>
</comment>
<keyword id="KW-0067">ATP-binding</keyword>
<keyword id="KW-0378">Hydrolase</keyword>
<keyword id="KW-0547">Nucleotide-binding</keyword>
<keyword id="KW-1185">Reference proteome</keyword>